<reference key="1">
    <citation type="journal article" date="2013" name="Proc. Natl. Acad. Sci. U.S.A.">
        <title>Polynucleobacter necessarius, a model for genome reduction in both free-living and symbiotic bacteria.</title>
        <authorList>
            <person name="Boscaro V."/>
            <person name="Felletti M."/>
            <person name="Vannini C."/>
            <person name="Ackerman M.S."/>
            <person name="Chain P.S."/>
            <person name="Malfatti S."/>
            <person name="Vergez L.M."/>
            <person name="Shin M."/>
            <person name="Doak T.G."/>
            <person name="Lynch M."/>
            <person name="Petroni G."/>
        </authorList>
    </citation>
    <scope>NUCLEOTIDE SEQUENCE [LARGE SCALE GENOMIC DNA]</scope>
    <source>
        <strain>STIR1</strain>
    </source>
</reference>
<dbReference type="EMBL" id="CP001010">
    <property type="protein sequence ID" value="ACB44189.1"/>
    <property type="molecule type" value="Genomic_DNA"/>
</dbReference>
<dbReference type="SMR" id="B1XV12"/>
<dbReference type="STRING" id="452638.Pnec_1008"/>
<dbReference type="KEGG" id="pne:Pnec_1008"/>
<dbReference type="eggNOG" id="COG0291">
    <property type="taxonomic scope" value="Bacteria"/>
</dbReference>
<dbReference type="HOGENOM" id="CLU_169643_1_0_4"/>
<dbReference type="OrthoDB" id="47476at2"/>
<dbReference type="GO" id="GO:0022625">
    <property type="term" value="C:cytosolic large ribosomal subunit"/>
    <property type="evidence" value="ECO:0007669"/>
    <property type="project" value="TreeGrafter"/>
</dbReference>
<dbReference type="GO" id="GO:0003735">
    <property type="term" value="F:structural constituent of ribosome"/>
    <property type="evidence" value="ECO:0007669"/>
    <property type="project" value="InterPro"/>
</dbReference>
<dbReference type="GO" id="GO:0006412">
    <property type="term" value="P:translation"/>
    <property type="evidence" value="ECO:0007669"/>
    <property type="project" value="UniProtKB-UniRule"/>
</dbReference>
<dbReference type="FunFam" id="4.10.410.60:FF:000001">
    <property type="entry name" value="50S ribosomal protein L35"/>
    <property type="match status" value="1"/>
</dbReference>
<dbReference type="Gene3D" id="4.10.410.60">
    <property type="match status" value="1"/>
</dbReference>
<dbReference type="HAMAP" id="MF_00514">
    <property type="entry name" value="Ribosomal_bL35"/>
    <property type="match status" value="1"/>
</dbReference>
<dbReference type="InterPro" id="IPR001706">
    <property type="entry name" value="Ribosomal_bL35"/>
</dbReference>
<dbReference type="InterPro" id="IPR021137">
    <property type="entry name" value="Ribosomal_bL35-like"/>
</dbReference>
<dbReference type="InterPro" id="IPR037229">
    <property type="entry name" value="Ribosomal_bL35_sf"/>
</dbReference>
<dbReference type="NCBIfam" id="TIGR00001">
    <property type="entry name" value="rpmI_bact"/>
    <property type="match status" value="1"/>
</dbReference>
<dbReference type="PANTHER" id="PTHR33343">
    <property type="entry name" value="54S RIBOSOMAL PROTEIN BL35M"/>
    <property type="match status" value="1"/>
</dbReference>
<dbReference type="PANTHER" id="PTHR33343:SF1">
    <property type="entry name" value="LARGE RIBOSOMAL SUBUNIT PROTEIN BL35M"/>
    <property type="match status" value="1"/>
</dbReference>
<dbReference type="Pfam" id="PF01632">
    <property type="entry name" value="Ribosomal_L35p"/>
    <property type="match status" value="1"/>
</dbReference>
<dbReference type="PRINTS" id="PR00064">
    <property type="entry name" value="RIBOSOMALL35"/>
</dbReference>
<dbReference type="SUPFAM" id="SSF143034">
    <property type="entry name" value="L35p-like"/>
    <property type="match status" value="1"/>
</dbReference>
<feature type="chain" id="PRO_1000127389" description="Large ribosomal subunit protein bL35">
    <location>
        <begin position="1"/>
        <end position="65"/>
    </location>
</feature>
<feature type="region of interest" description="Disordered" evidence="2">
    <location>
        <begin position="1"/>
        <end position="21"/>
    </location>
</feature>
<feature type="compositionally biased region" description="Basic residues" evidence="2">
    <location>
        <begin position="1"/>
        <end position="10"/>
    </location>
</feature>
<comment type="similarity">
    <text evidence="1">Belongs to the bacterial ribosomal protein bL35 family.</text>
</comment>
<proteinExistence type="inferred from homology"/>
<sequence>MPKMKSKSSAKMRFSVRAGGTIKRGQAFKRHILTKKTTKNKRHLRGSAEVAKADIKSIRSMLPYA</sequence>
<name>RL35_POLNS</name>
<gene>
    <name evidence="1" type="primary">rpmI</name>
    <name type="ordered locus">Pnec_1008</name>
</gene>
<organism>
    <name type="scientific">Polynucleobacter necessarius subsp. necessarius (strain STIR1)</name>
    <dbReference type="NCBI Taxonomy" id="452638"/>
    <lineage>
        <taxon>Bacteria</taxon>
        <taxon>Pseudomonadati</taxon>
        <taxon>Pseudomonadota</taxon>
        <taxon>Betaproteobacteria</taxon>
        <taxon>Burkholderiales</taxon>
        <taxon>Burkholderiaceae</taxon>
        <taxon>Polynucleobacter</taxon>
    </lineage>
</organism>
<keyword id="KW-0687">Ribonucleoprotein</keyword>
<keyword id="KW-0689">Ribosomal protein</keyword>
<protein>
    <recommendedName>
        <fullName evidence="1">Large ribosomal subunit protein bL35</fullName>
    </recommendedName>
    <alternativeName>
        <fullName evidence="3">50S ribosomal protein L35</fullName>
    </alternativeName>
</protein>
<accession>B1XV12</accession>
<evidence type="ECO:0000255" key="1">
    <source>
        <dbReference type="HAMAP-Rule" id="MF_00514"/>
    </source>
</evidence>
<evidence type="ECO:0000256" key="2">
    <source>
        <dbReference type="SAM" id="MobiDB-lite"/>
    </source>
</evidence>
<evidence type="ECO:0000305" key="3"/>